<keyword id="KW-0963">Cytoplasm</keyword>
<keyword id="KW-0489">Methyltransferase</keyword>
<keyword id="KW-0694">RNA-binding</keyword>
<keyword id="KW-0698">rRNA processing</keyword>
<keyword id="KW-0949">S-adenosyl-L-methionine</keyword>
<keyword id="KW-0808">Transferase</keyword>
<evidence type="ECO:0000255" key="1">
    <source>
        <dbReference type="HAMAP-Rule" id="MF_01858"/>
    </source>
</evidence>
<feature type="chain" id="PRO_0000366741" description="Ribosomal RNA large subunit methyltransferase K/L">
    <location>
        <begin position="1"/>
        <end position="702"/>
    </location>
</feature>
<feature type="domain" description="THUMP" evidence="1">
    <location>
        <begin position="43"/>
        <end position="154"/>
    </location>
</feature>
<accession>B1LJR4</accession>
<organism>
    <name type="scientific">Escherichia coli (strain SMS-3-5 / SECEC)</name>
    <dbReference type="NCBI Taxonomy" id="439855"/>
    <lineage>
        <taxon>Bacteria</taxon>
        <taxon>Pseudomonadati</taxon>
        <taxon>Pseudomonadota</taxon>
        <taxon>Gammaproteobacteria</taxon>
        <taxon>Enterobacterales</taxon>
        <taxon>Enterobacteriaceae</taxon>
        <taxon>Escherichia</taxon>
    </lineage>
</organism>
<gene>
    <name evidence="1" type="primary">rlmL</name>
    <name type="ordered locus">EcSMS35_2171</name>
</gene>
<proteinExistence type="inferred from homology"/>
<dbReference type="EC" id="2.1.1.173" evidence="1"/>
<dbReference type="EC" id="2.1.1.264" evidence="1"/>
<dbReference type="EMBL" id="CP000970">
    <property type="protein sequence ID" value="ACB19246.1"/>
    <property type="molecule type" value="Genomic_DNA"/>
</dbReference>
<dbReference type="SMR" id="B1LJR4"/>
<dbReference type="KEGG" id="ecm:EcSMS35_2171"/>
<dbReference type="HOGENOM" id="CLU_014042_2_0_6"/>
<dbReference type="Proteomes" id="UP000007011">
    <property type="component" value="Chromosome"/>
</dbReference>
<dbReference type="GO" id="GO:0005737">
    <property type="term" value="C:cytoplasm"/>
    <property type="evidence" value="ECO:0007669"/>
    <property type="project" value="UniProtKB-SubCell"/>
</dbReference>
<dbReference type="GO" id="GO:0052915">
    <property type="term" value="F:23S rRNA (guanine(2445)-N(2))-methyltransferase activity"/>
    <property type="evidence" value="ECO:0007669"/>
    <property type="project" value="UniProtKB-UniRule"/>
</dbReference>
<dbReference type="GO" id="GO:0003723">
    <property type="term" value="F:RNA binding"/>
    <property type="evidence" value="ECO:0007669"/>
    <property type="project" value="UniProtKB-KW"/>
</dbReference>
<dbReference type="GO" id="GO:0070043">
    <property type="term" value="F:rRNA (guanine-N7-)-methyltransferase activity"/>
    <property type="evidence" value="ECO:0007669"/>
    <property type="project" value="UniProtKB-UniRule"/>
</dbReference>
<dbReference type="CDD" id="cd02440">
    <property type="entry name" value="AdoMet_MTases"/>
    <property type="match status" value="1"/>
</dbReference>
<dbReference type="CDD" id="cd11715">
    <property type="entry name" value="THUMP_AdoMetMT"/>
    <property type="match status" value="1"/>
</dbReference>
<dbReference type="FunFam" id="3.30.750.80:FF:000001">
    <property type="entry name" value="Ribosomal RNA large subunit methyltransferase K/L"/>
    <property type="match status" value="1"/>
</dbReference>
<dbReference type="FunFam" id="3.40.50.150:FF:000039">
    <property type="entry name" value="Ribosomal RNA large subunit methyltransferase K/L"/>
    <property type="match status" value="1"/>
</dbReference>
<dbReference type="Gene3D" id="3.30.2130.30">
    <property type="match status" value="1"/>
</dbReference>
<dbReference type="Gene3D" id="3.30.750.80">
    <property type="entry name" value="RNA methyltransferase domain (HRMD) like"/>
    <property type="match status" value="1"/>
</dbReference>
<dbReference type="Gene3D" id="3.40.50.150">
    <property type="entry name" value="Vaccinia Virus protein VP39"/>
    <property type="match status" value="2"/>
</dbReference>
<dbReference type="HAMAP" id="MF_01858">
    <property type="entry name" value="23SrRNA_methyltr_KL"/>
    <property type="match status" value="1"/>
</dbReference>
<dbReference type="InterPro" id="IPR017244">
    <property type="entry name" value="23SrRNA_methyltr_KL"/>
</dbReference>
<dbReference type="InterPro" id="IPR002052">
    <property type="entry name" value="DNA_methylase_N6_adenine_CS"/>
</dbReference>
<dbReference type="InterPro" id="IPR000241">
    <property type="entry name" value="RlmKL-like_Mtase"/>
</dbReference>
<dbReference type="InterPro" id="IPR053943">
    <property type="entry name" value="RlmKL-like_Mtase_CS"/>
</dbReference>
<dbReference type="InterPro" id="IPR054170">
    <property type="entry name" value="RlmL_1st"/>
</dbReference>
<dbReference type="InterPro" id="IPR019614">
    <property type="entry name" value="SAM-dep_methyl-trfase"/>
</dbReference>
<dbReference type="InterPro" id="IPR029063">
    <property type="entry name" value="SAM-dependent_MTases_sf"/>
</dbReference>
<dbReference type="InterPro" id="IPR004114">
    <property type="entry name" value="THUMP_dom"/>
</dbReference>
<dbReference type="NCBIfam" id="NF008748">
    <property type="entry name" value="PRK11783.1"/>
    <property type="match status" value="1"/>
</dbReference>
<dbReference type="PANTHER" id="PTHR47313">
    <property type="entry name" value="RIBOSOMAL RNA LARGE SUBUNIT METHYLTRANSFERASE K/L"/>
    <property type="match status" value="1"/>
</dbReference>
<dbReference type="PANTHER" id="PTHR47313:SF1">
    <property type="entry name" value="RIBOSOMAL RNA LARGE SUBUNIT METHYLTRANSFERASE K_L"/>
    <property type="match status" value="1"/>
</dbReference>
<dbReference type="Pfam" id="PF10672">
    <property type="entry name" value="Methyltrans_SAM"/>
    <property type="match status" value="1"/>
</dbReference>
<dbReference type="Pfam" id="PF22020">
    <property type="entry name" value="RlmL_1st"/>
    <property type="match status" value="1"/>
</dbReference>
<dbReference type="Pfam" id="PF02926">
    <property type="entry name" value="THUMP"/>
    <property type="match status" value="1"/>
</dbReference>
<dbReference type="Pfam" id="PF01170">
    <property type="entry name" value="UPF0020"/>
    <property type="match status" value="1"/>
</dbReference>
<dbReference type="PIRSF" id="PIRSF037618">
    <property type="entry name" value="RNA_Mtase_bacteria_prd"/>
    <property type="match status" value="1"/>
</dbReference>
<dbReference type="PRINTS" id="PR00507">
    <property type="entry name" value="N12N6MTFRASE"/>
</dbReference>
<dbReference type="SMART" id="SM00981">
    <property type="entry name" value="THUMP"/>
    <property type="match status" value="1"/>
</dbReference>
<dbReference type="SUPFAM" id="SSF53335">
    <property type="entry name" value="S-adenosyl-L-methionine-dependent methyltransferases"/>
    <property type="match status" value="2"/>
</dbReference>
<dbReference type="PROSITE" id="PS51165">
    <property type="entry name" value="THUMP"/>
    <property type="match status" value="1"/>
</dbReference>
<dbReference type="PROSITE" id="PS01261">
    <property type="entry name" value="UPF0020"/>
    <property type="match status" value="1"/>
</dbReference>
<comment type="function">
    <text evidence="1">Specifically methylates the guanine in position 2445 (m2G2445) and the guanine in position 2069 (m7G2069) of 23S rRNA.</text>
</comment>
<comment type="catalytic activity">
    <reaction evidence="1">
        <text>guanosine(2445) in 23S rRNA + S-adenosyl-L-methionine = N(2)-methylguanosine(2445) in 23S rRNA + S-adenosyl-L-homocysteine + H(+)</text>
        <dbReference type="Rhea" id="RHEA:42740"/>
        <dbReference type="Rhea" id="RHEA-COMP:10215"/>
        <dbReference type="Rhea" id="RHEA-COMP:10216"/>
        <dbReference type="ChEBI" id="CHEBI:15378"/>
        <dbReference type="ChEBI" id="CHEBI:57856"/>
        <dbReference type="ChEBI" id="CHEBI:59789"/>
        <dbReference type="ChEBI" id="CHEBI:74269"/>
        <dbReference type="ChEBI" id="CHEBI:74481"/>
        <dbReference type="EC" id="2.1.1.173"/>
    </reaction>
</comment>
<comment type="catalytic activity">
    <reaction evidence="1">
        <text>guanosine(2069) in 23S rRNA + S-adenosyl-L-methionine = N(2)-methylguanosine(2069) in 23S rRNA + S-adenosyl-L-homocysteine + H(+)</text>
        <dbReference type="Rhea" id="RHEA:43772"/>
        <dbReference type="Rhea" id="RHEA-COMP:10688"/>
        <dbReference type="Rhea" id="RHEA-COMP:10689"/>
        <dbReference type="ChEBI" id="CHEBI:15378"/>
        <dbReference type="ChEBI" id="CHEBI:57856"/>
        <dbReference type="ChEBI" id="CHEBI:59789"/>
        <dbReference type="ChEBI" id="CHEBI:74269"/>
        <dbReference type="ChEBI" id="CHEBI:74481"/>
        <dbReference type="EC" id="2.1.1.264"/>
    </reaction>
</comment>
<comment type="subcellular location">
    <subcellularLocation>
        <location evidence="1">Cytoplasm</location>
    </subcellularLocation>
</comment>
<comment type="similarity">
    <text evidence="1">Belongs to the methyltransferase superfamily. RlmKL family.</text>
</comment>
<reference key="1">
    <citation type="journal article" date="2008" name="J. Bacteriol.">
        <title>Insights into the environmental resistance gene pool from the genome sequence of the multidrug-resistant environmental isolate Escherichia coli SMS-3-5.</title>
        <authorList>
            <person name="Fricke W.F."/>
            <person name="Wright M.S."/>
            <person name="Lindell A.H."/>
            <person name="Harkins D.M."/>
            <person name="Baker-Austin C."/>
            <person name="Ravel J."/>
            <person name="Stepanauskas R."/>
        </authorList>
    </citation>
    <scope>NUCLEOTIDE SEQUENCE [LARGE SCALE GENOMIC DNA]</scope>
    <source>
        <strain>SMS-3-5 / SECEC</strain>
    </source>
</reference>
<protein>
    <recommendedName>
        <fullName evidence="1">Ribosomal RNA large subunit methyltransferase K/L</fullName>
    </recommendedName>
    <domain>
        <recommendedName>
            <fullName evidence="1">23S rRNA m2G2445 methyltransferase</fullName>
            <ecNumber evidence="1">2.1.1.173</ecNumber>
        </recommendedName>
        <alternativeName>
            <fullName evidence="1">rRNA (guanine-N(2)-)-methyltransferase RlmL</fullName>
        </alternativeName>
    </domain>
    <domain>
        <recommendedName>
            <fullName evidence="1">23S rRNA m7G2069 methyltransferase</fullName>
            <ecNumber evidence="1">2.1.1.264</ecNumber>
        </recommendedName>
        <alternativeName>
            <fullName evidence="1">rRNA (guanine-N(7)-)-methyltransferase RlmK</fullName>
        </alternativeName>
    </domain>
</protein>
<name>RLMKL_ECOSM</name>
<sequence length="702" mass="78794">MNSLFASTARGLEELLKTELENLGAVECQVVQGGVHFKGDTRLVYQSLMWSRLASRIMLPLGECKVYSDLDLYLGVQAINWTEMFNPGATFAVHFSGLNDTIRNSQYGAMKVKDAIVDAFTRKNLPRPNVDRDAPDIRVNVWLHKETASIALDLSGDGLHLRGYRDRAGIAPIKETLAAAIVMRSGWQPGTPLLDPMCGSGTLLIEAAMLATDRAPGLHRGRWGFSGWAQHDEAIWQEVKAEAQTRARKGLAEYSSHFYGSDSDARVIQRARTNARLAGIGELITFEVKDVAQLANPLPKGPYGTVLSNPPYGERLDSEPALIALHSLLGRIMKNQFGGWNLSLFSASPDLLSCLQLRADKQYKAKNGPLDCVQKNYHVAESTPDSKPAMAAEDYANRLRKNLKKFEKWARQEGIECYRLYDADLPEYNVAVDRYADWVVVQEYAPPKTIDAHKARQRLFDIIAATISVLGIAPNKLVLKTRERQKGKNQYQKLGEKGEFLEVTEYNAHLWVNLTDYLDTGLFLDHRIARRMLGQMSKGKDFLNLFSYTGSATVHAGLGGARSTTTVDMSRTYLEWAERNLRLNGLTGRAHRLIQADCLAWLREANEQFDLIFIDPPTFSNSKRMEDAFDVQRDHLVLMKDLKRLLRAGGTIMFSNNKRGFRMDLDGLAKLGLKAQEITQKTLSQDFARNRQIHNCWLITAA</sequence>